<keyword id="KW-0963">Cytoplasm</keyword>
<keyword id="KW-0489">Methyltransferase</keyword>
<keyword id="KW-1185">Reference proteome</keyword>
<keyword id="KW-0698">rRNA processing</keyword>
<keyword id="KW-0949">S-adenosyl-L-methionine</keyword>
<keyword id="KW-0808">Transferase</keyword>
<reference key="1">
    <citation type="journal article" date="2006" name="Proc. Natl. Acad. Sci. U.S.A.">
        <title>Burkholderia xenovorans LB400 harbors a multi-replicon, 9.73-Mbp genome shaped for versatility.</title>
        <authorList>
            <person name="Chain P.S.G."/>
            <person name="Denef V.J."/>
            <person name="Konstantinidis K.T."/>
            <person name="Vergez L.M."/>
            <person name="Agullo L."/>
            <person name="Reyes V.L."/>
            <person name="Hauser L."/>
            <person name="Cordova M."/>
            <person name="Gomez L."/>
            <person name="Gonzalez M."/>
            <person name="Land M."/>
            <person name="Lao V."/>
            <person name="Larimer F."/>
            <person name="LiPuma J.J."/>
            <person name="Mahenthiralingam E."/>
            <person name="Malfatti S.A."/>
            <person name="Marx C.J."/>
            <person name="Parnell J.J."/>
            <person name="Ramette A."/>
            <person name="Richardson P."/>
            <person name="Seeger M."/>
            <person name="Smith D."/>
            <person name="Spilker T."/>
            <person name="Sul W.J."/>
            <person name="Tsoi T.V."/>
            <person name="Ulrich L.E."/>
            <person name="Zhulin I.B."/>
            <person name="Tiedje J.M."/>
        </authorList>
    </citation>
    <scope>NUCLEOTIDE SEQUENCE [LARGE SCALE GENOMIC DNA]</scope>
    <source>
        <strain>LB400</strain>
    </source>
</reference>
<accession>Q13TY4</accession>
<dbReference type="EC" id="2.1.1.199" evidence="1"/>
<dbReference type="EMBL" id="CP000270">
    <property type="protein sequence ID" value="ABE32455.1"/>
    <property type="molecule type" value="Genomic_DNA"/>
</dbReference>
<dbReference type="RefSeq" id="WP_011489924.1">
    <property type="nucleotide sequence ID" value="NZ_CP008760.1"/>
</dbReference>
<dbReference type="SMR" id="Q13TY4"/>
<dbReference type="STRING" id="266265.Bxe_A0478"/>
<dbReference type="KEGG" id="bxe:Bxe_A0478"/>
<dbReference type="PATRIC" id="fig|266265.5.peg.4138"/>
<dbReference type="eggNOG" id="COG0275">
    <property type="taxonomic scope" value="Bacteria"/>
</dbReference>
<dbReference type="OrthoDB" id="9806637at2"/>
<dbReference type="Proteomes" id="UP000001817">
    <property type="component" value="Chromosome 1"/>
</dbReference>
<dbReference type="GO" id="GO:0005737">
    <property type="term" value="C:cytoplasm"/>
    <property type="evidence" value="ECO:0007669"/>
    <property type="project" value="UniProtKB-SubCell"/>
</dbReference>
<dbReference type="GO" id="GO:0071424">
    <property type="term" value="F:rRNA (cytosine-N4-)-methyltransferase activity"/>
    <property type="evidence" value="ECO:0007669"/>
    <property type="project" value="UniProtKB-UniRule"/>
</dbReference>
<dbReference type="GO" id="GO:0070475">
    <property type="term" value="P:rRNA base methylation"/>
    <property type="evidence" value="ECO:0007669"/>
    <property type="project" value="UniProtKB-UniRule"/>
</dbReference>
<dbReference type="Gene3D" id="1.10.150.170">
    <property type="entry name" value="Putative methyltransferase TM0872, insert domain"/>
    <property type="match status" value="1"/>
</dbReference>
<dbReference type="Gene3D" id="3.40.50.150">
    <property type="entry name" value="Vaccinia Virus protein VP39"/>
    <property type="match status" value="1"/>
</dbReference>
<dbReference type="HAMAP" id="MF_01007">
    <property type="entry name" value="16SrRNA_methyltr_H"/>
    <property type="match status" value="1"/>
</dbReference>
<dbReference type="InterPro" id="IPR002903">
    <property type="entry name" value="RsmH"/>
</dbReference>
<dbReference type="InterPro" id="IPR023397">
    <property type="entry name" value="SAM-dep_MeTrfase_MraW_recog"/>
</dbReference>
<dbReference type="InterPro" id="IPR029063">
    <property type="entry name" value="SAM-dependent_MTases_sf"/>
</dbReference>
<dbReference type="NCBIfam" id="TIGR00006">
    <property type="entry name" value="16S rRNA (cytosine(1402)-N(4))-methyltransferase RsmH"/>
    <property type="match status" value="1"/>
</dbReference>
<dbReference type="PANTHER" id="PTHR11265:SF0">
    <property type="entry name" value="12S RRNA N4-METHYLCYTIDINE METHYLTRANSFERASE"/>
    <property type="match status" value="1"/>
</dbReference>
<dbReference type="PANTHER" id="PTHR11265">
    <property type="entry name" value="S-ADENOSYL-METHYLTRANSFERASE MRAW"/>
    <property type="match status" value="1"/>
</dbReference>
<dbReference type="Pfam" id="PF01795">
    <property type="entry name" value="Methyltransf_5"/>
    <property type="match status" value="1"/>
</dbReference>
<dbReference type="PIRSF" id="PIRSF004486">
    <property type="entry name" value="MraW"/>
    <property type="match status" value="1"/>
</dbReference>
<dbReference type="SUPFAM" id="SSF81799">
    <property type="entry name" value="Putative methyltransferase TM0872, insert domain"/>
    <property type="match status" value="1"/>
</dbReference>
<dbReference type="SUPFAM" id="SSF53335">
    <property type="entry name" value="S-adenosyl-L-methionine-dependent methyltransferases"/>
    <property type="match status" value="1"/>
</dbReference>
<feature type="chain" id="PRO_0000386782" description="Ribosomal RNA small subunit methyltransferase H">
    <location>
        <begin position="1"/>
        <end position="317"/>
    </location>
</feature>
<feature type="binding site" evidence="1">
    <location>
        <begin position="39"/>
        <end position="41"/>
    </location>
    <ligand>
        <name>S-adenosyl-L-methionine</name>
        <dbReference type="ChEBI" id="CHEBI:59789"/>
    </ligand>
</feature>
<feature type="binding site" evidence="1">
    <location>
        <position position="59"/>
    </location>
    <ligand>
        <name>S-adenosyl-L-methionine</name>
        <dbReference type="ChEBI" id="CHEBI:59789"/>
    </ligand>
</feature>
<feature type="binding site" evidence="1">
    <location>
        <position position="83"/>
    </location>
    <ligand>
        <name>S-adenosyl-L-methionine</name>
        <dbReference type="ChEBI" id="CHEBI:59789"/>
    </ligand>
</feature>
<feature type="binding site" evidence="1">
    <location>
        <position position="104"/>
    </location>
    <ligand>
        <name>S-adenosyl-L-methionine</name>
        <dbReference type="ChEBI" id="CHEBI:59789"/>
    </ligand>
</feature>
<feature type="binding site" evidence="1">
    <location>
        <position position="111"/>
    </location>
    <ligand>
        <name>S-adenosyl-L-methionine</name>
        <dbReference type="ChEBI" id="CHEBI:59789"/>
    </ligand>
</feature>
<proteinExistence type="inferred from homology"/>
<comment type="function">
    <text evidence="1">Specifically methylates the N4 position of cytidine in position 1402 (C1402) of 16S rRNA.</text>
</comment>
<comment type="catalytic activity">
    <reaction evidence="1">
        <text>cytidine(1402) in 16S rRNA + S-adenosyl-L-methionine = N(4)-methylcytidine(1402) in 16S rRNA + S-adenosyl-L-homocysteine + H(+)</text>
        <dbReference type="Rhea" id="RHEA:42928"/>
        <dbReference type="Rhea" id="RHEA-COMP:10286"/>
        <dbReference type="Rhea" id="RHEA-COMP:10287"/>
        <dbReference type="ChEBI" id="CHEBI:15378"/>
        <dbReference type="ChEBI" id="CHEBI:57856"/>
        <dbReference type="ChEBI" id="CHEBI:59789"/>
        <dbReference type="ChEBI" id="CHEBI:74506"/>
        <dbReference type="ChEBI" id="CHEBI:82748"/>
        <dbReference type="EC" id="2.1.1.199"/>
    </reaction>
</comment>
<comment type="subcellular location">
    <subcellularLocation>
        <location evidence="1">Cytoplasm</location>
    </subcellularLocation>
</comment>
<comment type="similarity">
    <text evidence="1">Belongs to the methyltransferase superfamily. RsmH family.</text>
</comment>
<organism>
    <name type="scientific">Paraburkholderia xenovorans (strain LB400)</name>
    <dbReference type="NCBI Taxonomy" id="266265"/>
    <lineage>
        <taxon>Bacteria</taxon>
        <taxon>Pseudomonadati</taxon>
        <taxon>Pseudomonadota</taxon>
        <taxon>Betaproteobacteria</taxon>
        <taxon>Burkholderiales</taxon>
        <taxon>Burkholderiaceae</taxon>
        <taxon>Paraburkholderia</taxon>
    </lineage>
</organism>
<protein>
    <recommendedName>
        <fullName evidence="1">Ribosomal RNA small subunit methyltransferase H</fullName>
        <ecNumber evidence="1">2.1.1.199</ecNumber>
    </recommendedName>
    <alternativeName>
        <fullName evidence="1">16S rRNA m(4)C1402 methyltransferase</fullName>
    </alternativeName>
    <alternativeName>
        <fullName evidence="1">rRNA (cytosine-N(4)-)-methyltransferase RsmH</fullName>
    </alternativeName>
</protein>
<sequence length="317" mass="34552">MAPAMGNELQHRTVLLEEAVQALVTRADGVYVDGTFGRGGHSRLVLEKLGESGRLIAFDKDPLAIATAQQITDPRFGIVHESFASLRTAMAERGVGRVSGVLLDLGVSSPQVDDPERGFSFRADGPLDMRMDPTRGESAADWLARATVQELTEVIRDYGEERFAFQIAKALVARRAESDRLGPLVSTGELAQIVANVVKTREKGKDPATRTFQAIRIHINQELAELQVVLEAALSLLEQGGRLVVISFHSLEDRIVKRFMQAHASTPAVDRRLPIRAVDLPSPPLKIIGRVFASDAEVAANPRARSAVMRVAERIAP</sequence>
<gene>
    <name evidence="1" type="primary">rsmH</name>
    <name type="synonym">mraW</name>
    <name type="ordered locus">Bxeno_A3917</name>
    <name type="ORF">Bxe_A0478</name>
</gene>
<name>RSMH_PARXL</name>
<evidence type="ECO:0000255" key="1">
    <source>
        <dbReference type="HAMAP-Rule" id="MF_01007"/>
    </source>
</evidence>